<feature type="chain" id="PRO_0000231716" description="Imidazole glycerol phosphate synthase subunit HisH">
    <location>
        <begin position="1"/>
        <end position="201"/>
    </location>
</feature>
<feature type="domain" description="Glutamine amidotransferase type-1" evidence="1">
    <location>
        <begin position="1"/>
        <end position="201"/>
    </location>
</feature>
<feature type="active site" description="Nucleophile" evidence="1">
    <location>
        <position position="79"/>
    </location>
</feature>
<feature type="active site" evidence="1">
    <location>
        <position position="183"/>
    </location>
</feature>
<feature type="active site" evidence="1">
    <location>
        <position position="185"/>
    </location>
</feature>
<evidence type="ECO:0000255" key="1">
    <source>
        <dbReference type="HAMAP-Rule" id="MF_00278"/>
    </source>
</evidence>
<reference key="1">
    <citation type="submission" date="2005-08" db="EMBL/GenBank/DDBJ databases">
        <title>Complete sequence of Chlorobium chlorochromatii CaD3.</title>
        <authorList>
            <consortium name="US DOE Joint Genome Institute"/>
            <person name="Copeland A."/>
            <person name="Lucas S."/>
            <person name="Lapidus A."/>
            <person name="Barry K."/>
            <person name="Detter J.C."/>
            <person name="Glavina T."/>
            <person name="Hammon N."/>
            <person name="Israni S."/>
            <person name="Pitluck S."/>
            <person name="Bryant D."/>
            <person name="Schmutz J."/>
            <person name="Larimer F."/>
            <person name="Land M."/>
            <person name="Kyrpides N."/>
            <person name="Ivanova N."/>
            <person name="Richardson P."/>
        </authorList>
    </citation>
    <scope>NUCLEOTIDE SEQUENCE [LARGE SCALE GENOMIC DNA]</scope>
    <source>
        <strain>CaD3</strain>
    </source>
</reference>
<dbReference type="EC" id="4.3.2.10" evidence="1"/>
<dbReference type="EC" id="3.5.1.2" evidence="1"/>
<dbReference type="EMBL" id="CP000108">
    <property type="protein sequence ID" value="ABB27812.1"/>
    <property type="molecule type" value="Genomic_DNA"/>
</dbReference>
<dbReference type="SMR" id="Q3AT63"/>
<dbReference type="STRING" id="340177.Cag_0539"/>
<dbReference type="KEGG" id="cch:Cag_0539"/>
<dbReference type="eggNOG" id="COG0118">
    <property type="taxonomic scope" value="Bacteria"/>
</dbReference>
<dbReference type="HOGENOM" id="CLU_071837_2_2_10"/>
<dbReference type="OrthoDB" id="9807137at2"/>
<dbReference type="UniPathway" id="UPA00031">
    <property type="reaction ID" value="UER00010"/>
</dbReference>
<dbReference type="GO" id="GO:0005737">
    <property type="term" value="C:cytoplasm"/>
    <property type="evidence" value="ECO:0007669"/>
    <property type="project" value="UniProtKB-SubCell"/>
</dbReference>
<dbReference type="GO" id="GO:0004359">
    <property type="term" value="F:glutaminase activity"/>
    <property type="evidence" value="ECO:0007669"/>
    <property type="project" value="UniProtKB-EC"/>
</dbReference>
<dbReference type="GO" id="GO:0000107">
    <property type="term" value="F:imidazoleglycerol-phosphate synthase activity"/>
    <property type="evidence" value="ECO:0007669"/>
    <property type="project" value="UniProtKB-UniRule"/>
</dbReference>
<dbReference type="GO" id="GO:0016829">
    <property type="term" value="F:lyase activity"/>
    <property type="evidence" value="ECO:0007669"/>
    <property type="project" value="UniProtKB-KW"/>
</dbReference>
<dbReference type="GO" id="GO:0000105">
    <property type="term" value="P:L-histidine biosynthetic process"/>
    <property type="evidence" value="ECO:0007669"/>
    <property type="project" value="UniProtKB-UniRule"/>
</dbReference>
<dbReference type="CDD" id="cd01748">
    <property type="entry name" value="GATase1_IGP_Synthase"/>
    <property type="match status" value="1"/>
</dbReference>
<dbReference type="Gene3D" id="3.40.50.880">
    <property type="match status" value="1"/>
</dbReference>
<dbReference type="HAMAP" id="MF_00278">
    <property type="entry name" value="HisH"/>
    <property type="match status" value="1"/>
</dbReference>
<dbReference type="InterPro" id="IPR029062">
    <property type="entry name" value="Class_I_gatase-like"/>
</dbReference>
<dbReference type="InterPro" id="IPR017926">
    <property type="entry name" value="GATASE"/>
</dbReference>
<dbReference type="InterPro" id="IPR010139">
    <property type="entry name" value="Imidazole-glycPsynth_HisH"/>
</dbReference>
<dbReference type="NCBIfam" id="TIGR01855">
    <property type="entry name" value="IMP_synth_hisH"/>
    <property type="match status" value="1"/>
</dbReference>
<dbReference type="PANTHER" id="PTHR42701">
    <property type="entry name" value="IMIDAZOLE GLYCEROL PHOSPHATE SYNTHASE SUBUNIT HISH"/>
    <property type="match status" value="1"/>
</dbReference>
<dbReference type="PANTHER" id="PTHR42701:SF1">
    <property type="entry name" value="IMIDAZOLE GLYCEROL PHOSPHATE SYNTHASE SUBUNIT HISH"/>
    <property type="match status" value="1"/>
</dbReference>
<dbReference type="Pfam" id="PF00117">
    <property type="entry name" value="GATase"/>
    <property type="match status" value="1"/>
</dbReference>
<dbReference type="PIRSF" id="PIRSF000495">
    <property type="entry name" value="Amidotransf_hisH"/>
    <property type="match status" value="1"/>
</dbReference>
<dbReference type="SUPFAM" id="SSF52317">
    <property type="entry name" value="Class I glutamine amidotransferase-like"/>
    <property type="match status" value="1"/>
</dbReference>
<dbReference type="PROSITE" id="PS51273">
    <property type="entry name" value="GATASE_TYPE_1"/>
    <property type="match status" value="1"/>
</dbReference>
<sequence>MVFIADYGAGNLRSVLKAFEFLGIKAIVSNDPRKMAGYRKVLLPGVGAFGQAMQSLEALGFVSALLEHVDKGGHLLGICLGMQLLLSESEEMGTHKGLNLVPGKVKHFVSSSDKIPQIGWNAVDFSKQSDLFRNVADHSFFYFVHSYYCETESVEAVAATTLFAGQNFCSAIEKNGIFAVQFHPEKSADAGLKVLANFAEL</sequence>
<keyword id="KW-0028">Amino-acid biosynthesis</keyword>
<keyword id="KW-0963">Cytoplasm</keyword>
<keyword id="KW-0315">Glutamine amidotransferase</keyword>
<keyword id="KW-0368">Histidine biosynthesis</keyword>
<keyword id="KW-0378">Hydrolase</keyword>
<keyword id="KW-0456">Lyase</keyword>
<accession>Q3AT63</accession>
<gene>
    <name evidence="1" type="primary">hisH</name>
    <name type="ordered locus">Cag_0539</name>
</gene>
<name>HIS5_CHLCH</name>
<protein>
    <recommendedName>
        <fullName evidence="1">Imidazole glycerol phosphate synthase subunit HisH</fullName>
        <ecNumber evidence="1">4.3.2.10</ecNumber>
    </recommendedName>
    <alternativeName>
        <fullName evidence="1">IGP synthase glutaminase subunit</fullName>
        <ecNumber evidence="1">3.5.1.2</ecNumber>
    </alternativeName>
    <alternativeName>
        <fullName evidence="1">IGP synthase subunit HisH</fullName>
    </alternativeName>
    <alternativeName>
        <fullName evidence="1">ImGP synthase subunit HisH</fullName>
        <shortName evidence="1">IGPS subunit HisH</shortName>
    </alternativeName>
</protein>
<organism>
    <name type="scientific">Chlorobium chlorochromatii (strain CaD3)</name>
    <dbReference type="NCBI Taxonomy" id="340177"/>
    <lineage>
        <taxon>Bacteria</taxon>
        <taxon>Pseudomonadati</taxon>
        <taxon>Chlorobiota</taxon>
        <taxon>Chlorobiia</taxon>
        <taxon>Chlorobiales</taxon>
        <taxon>Chlorobiaceae</taxon>
        <taxon>Chlorobium/Pelodictyon group</taxon>
        <taxon>Chlorobium</taxon>
    </lineage>
</organism>
<proteinExistence type="inferred from homology"/>
<comment type="function">
    <text evidence="1">IGPS catalyzes the conversion of PRFAR and glutamine to IGP, AICAR and glutamate. The HisH subunit catalyzes the hydrolysis of glutamine to glutamate and ammonia as part of the synthesis of IGP and AICAR. The resulting ammonia molecule is channeled to the active site of HisF.</text>
</comment>
<comment type="catalytic activity">
    <reaction evidence="1">
        <text>5-[(5-phospho-1-deoxy-D-ribulos-1-ylimino)methylamino]-1-(5-phospho-beta-D-ribosyl)imidazole-4-carboxamide + L-glutamine = D-erythro-1-(imidazol-4-yl)glycerol 3-phosphate + 5-amino-1-(5-phospho-beta-D-ribosyl)imidazole-4-carboxamide + L-glutamate + H(+)</text>
        <dbReference type="Rhea" id="RHEA:24793"/>
        <dbReference type="ChEBI" id="CHEBI:15378"/>
        <dbReference type="ChEBI" id="CHEBI:29985"/>
        <dbReference type="ChEBI" id="CHEBI:58278"/>
        <dbReference type="ChEBI" id="CHEBI:58359"/>
        <dbReference type="ChEBI" id="CHEBI:58475"/>
        <dbReference type="ChEBI" id="CHEBI:58525"/>
        <dbReference type="EC" id="4.3.2.10"/>
    </reaction>
</comment>
<comment type="catalytic activity">
    <reaction evidence="1">
        <text>L-glutamine + H2O = L-glutamate + NH4(+)</text>
        <dbReference type="Rhea" id="RHEA:15889"/>
        <dbReference type="ChEBI" id="CHEBI:15377"/>
        <dbReference type="ChEBI" id="CHEBI:28938"/>
        <dbReference type="ChEBI" id="CHEBI:29985"/>
        <dbReference type="ChEBI" id="CHEBI:58359"/>
        <dbReference type="EC" id="3.5.1.2"/>
    </reaction>
</comment>
<comment type="pathway">
    <text evidence="1">Amino-acid biosynthesis; L-histidine biosynthesis; L-histidine from 5-phospho-alpha-D-ribose 1-diphosphate: step 5/9.</text>
</comment>
<comment type="subunit">
    <text evidence="1">Heterodimer of HisH and HisF.</text>
</comment>
<comment type="subcellular location">
    <subcellularLocation>
        <location evidence="1">Cytoplasm</location>
    </subcellularLocation>
</comment>